<comment type="function">
    <text evidence="2">Catalyzes the phosphorylation of hydroxymethylpyrimidine phosphate (HMP-P) to HMP-PP, and of HMP to HMP-P.</text>
</comment>
<comment type="catalytic activity">
    <reaction evidence="2">
        <text>4-amino-5-hydroxymethyl-2-methylpyrimidine + ATP = 4-amino-2-methyl-5-(phosphooxymethyl)pyrimidine + ADP + H(+)</text>
        <dbReference type="Rhea" id="RHEA:23096"/>
        <dbReference type="ChEBI" id="CHEBI:15378"/>
        <dbReference type="ChEBI" id="CHEBI:16892"/>
        <dbReference type="ChEBI" id="CHEBI:30616"/>
        <dbReference type="ChEBI" id="CHEBI:58354"/>
        <dbReference type="ChEBI" id="CHEBI:456216"/>
        <dbReference type="EC" id="2.7.1.49"/>
    </reaction>
</comment>
<comment type="catalytic activity">
    <reaction evidence="2">
        <text>4-amino-2-methyl-5-(phosphooxymethyl)pyrimidine + ATP = 4-amino-2-methyl-5-(diphosphooxymethyl)pyrimidine + ADP</text>
        <dbReference type="Rhea" id="RHEA:19893"/>
        <dbReference type="ChEBI" id="CHEBI:30616"/>
        <dbReference type="ChEBI" id="CHEBI:57841"/>
        <dbReference type="ChEBI" id="CHEBI:58354"/>
        <dbReference type="ChEBI" id="CHEBI:456216"/>
        <dbReference type="EC" id="2.7.4.7"/>
    </reaction>
</comment>
<comment type="pathway">
    <text>Cofactor biosynthesis; thiamine diphosphate biosynthesis; 4-amino-2-methyl-5-diphosphomethylpyrimidine from 5-amino-1-(5-phospho-D-ribosyl)imidazole: step 2/3.</text>
</comment>
<comment type="pathway">
    <text>Cofactor biosynthesis; thiamine diphosphate biosynthesis; 4-amino-2-methyl-5-diphosphomethylpyrimidine from 5-amino-1-(5-phospho-D-ribosyl)imidazole: step 3/3.</text>
</comment>
<comment type="similarity">
    <text evidence="3">Belongs to the ThiD family.</text>
</comment>
<keyword id="KW-0067">ATP-binding</keyword>
<keyword id="KW-0418">Kinase</keyword>
<keyword id="KW-0547">Nucleotide-binding</keyword>
<keyword id="KW-0784">Thiamine biosynthesis</keyword>
<keyword id="KW-0808">Transferase</keyword>
<sequence length="276" mass="30288">MIKPKIALTIAGTDPTGGAGVMADLKSFHSCGVYGMGVVTSIVAQNTLGVQHIHNLNHQWVDEQLDSVFNDTLPHAIKTGMIATADTMETIRHYLMQHESIPYVIDPVMLAKSGDSLMDNDTKQNLQHTLLPLADVVTPNLPEAEEITGLTIDSEEKIMQAGRIFINEIGSKGVIIKGGHSNDTDIAKDYLFTNEGVQTFENERFKTKHTHGTGCTFSAVITAELAKGRRLFEAVHKAKKFISMSIQYTPEIGRGRGPVNHFAYLKKEGLDDELSK</sequence>
<name>THID_STAAW</name>
<evidence type="ECO:0000250" key="1"/>
<evidence type="ECO:0000250" key="2">
    <source>
        <dbReference type="UniProtKB" id="P76422"/>
    </source>
</evidence>
<evidence type="ECO:0000305" key="3"/>
<reference key="1">
    <citation type="journal article" date="2002" name="Lancet">
        <title>Genome and virulence determinants of high virulence community-acquired MRSA.</title>
        <authorList>
            <person name="Baba T."/>
            <person name="Takeuchi F."/>
            <person name="Kuroda M."/>
            <person name="Yuzawa H."/>
            <person name="Aoki K."/>
            <person name="Oguchi A."/>
            <person name="Nagai Y."/>
            <person name="Iwama N."/>
            <person name="Asano K."/>
            <person name="Naimi T."/>
            <person name="Kuroda H."/>
            <person name="Cui L."/>
            <person name="Yamamoto K."/>
            <person name="Hiramatsu K."/>
        </authorList>
    </citation>
    <scope>NUCLEOTIDE SEQUENCE [LARGE SCALE GENOMIC DNA]</scope>
    <source>
        <strain>MW2</strain>
    </source>
</reference>
<dbReference type="EC" id="2.7.1.49" evidence="2"/>
<dbReference type="EC" id="2.7.4.7" evidence="2"/>
<dbReference type="EMBL" id="BA000033">
    <property type="protein sequence ID" value="BAB95881.1"/>
    <property type="molecule type" value="Genomic_DNA"/>
</dbReference>
<dbReference type="RefSeq" id="WP_000594960.1">
    <property type="nucleotide sequence ID" value="NC_003923.1"/>
</dbReference>
<dbReference type="SMR" id="Q8NVH3"/>
<dbReference type="KEGG" id="sam:MW2016"/>
<dbReference type="HOGENOM" id="CLU_020520_0_0_9"/>
<dbReference type="UniPathway" id="UPA00060">
    <property type="reaction ID" value="UER00137"/>
</dbReference>
<dbReference type="UniPathway" id="UPA00060">
    <property type="reaction ID" value="UER00138"/>
</dbReference>
<dbReference type="GO" id="GO:0005829">
    <property type="term" value="C:cytosol"/>
    <property type="evidence" value="ECO:0007669"/>
    <property type="project" value="TreeGrafter"/>
</dbReference>
<dbReference type="GO" id="GO:0005524">
    <property type="term" value="F:ATP binding"/>
    <property type="evidence" value="ECO:0007669"/>
    <property type="project" value="UniProtKB-KW"/>
</dbReference>
<dbReference type="GO" id="GO:0008902">
    <property type="term" value="F:hydroxymethylpyrimidine kinase activity"/>
    <property type="evidence" value="ECO:0007669"/>
    <property type="project" value="UniProtKB-EC"/>
</dbReference>
<dbReference type="GO" id="GO:0008972">
    <property type="term" value="F:phosphomethylpyrimidine kinase activity"/>
    <property type="evidence" value="ECO:0007669"/>
    <property type="project" value="UniProtKB-EC"/>
</dbReference>
<dbReference type="GO" id="GO:0009228">
    <property type="term" value="P:thiamine biosynthetic process"/>
    <property type="evidence" value="ECO:0007669"/>
    <property type="project" value="UniProtKB-KW"/>
</dbReference>
<dbReference type="GO" id="GO:0009229">
    <property type="term" value="P:thiamine diphosphate biosynthetic process"/>
    <property type="evidence" value="ECO:0007669"/>
    <property type="project" value="UniProtKB-UniPathway"/>
</dbReference>
<dbReference type="CDD" id="cd01169">
    <property type="entry name" value="HMPP_kinase"/>
    <property type="match status" value="1"/>
</dbReference>
<dbReference type="FunFam" id="3.40.1190.20:FF:000003">
    <property type="entry name" value="Phosphomethylpyrimidine kinase ThiD"/>
    <property type="match status" value="1"/>
</dbReference>
<dbReference type="Gene3D" id="3.40.1190.20">
    <property type="match status" value="1"/>
</dbReference>
<dbReference type="InterPro" id="IPR004399">
    <property type="entry name" value="HMP/HMP-P_kinase_dom"/>
</dbReference>
<dbReference type="InterPro" id="IPR013749">
    <property type="entry name" value="PM/HMP-P_kinase-1"/>
</dbReference>
<dbReference type="InterPro" id="IPR029056">
    <property type="entry name" value="Ribokinase-like"/>
</dbReference>
<dbReference type="NCBIfam" id="TIGR00097">
    <property type="entry name" value="HMP-P_kinase"/>
    <property type="match status" value="1"/>
</dbReference>
<dbReference type="PANTHER" id="PTHR20858:SF17">
    <property type="entry name" value="HYDROXYMETHYLPYRIMIDINE_PHOSPHOMETHYLPYRIMIDINE KINASE THI20-RELATED"/>
    <property type="match status" value="1"/>
</dbReference>
<dbReference type="PANTHER" id="PTHR20858">
    <property type="entry name" value="PHOSPHOMETHYLPYRIMIDINE KINASE"/>
    <property type="match status" value="1"/>
</dbReference>
<dbReference type="Pfam" id="PF08543">
    <property type="entry name" value="Phos_pyr_kin"/>
    <property type="match status" value="1"/>
</dbReference>
<dbReference type="SUPFAM" id="SSF53613">
    <property type="entry name" value="Ribokinase-like"/>
    <property type="match status" value="1"/>
</dbReference>
<gene>
    <name type="primary">thiD</name>
    <name type="ordered locus">MW2016</name>
</gene>
<protein>
    <recommendedName>
        <fullName>Hydroxymethylpyrimidine/phosphomethylpyrimidine kinase</fullName>
        <ecNumber evidence="2">2.7.1.49</ecNumber>
        <ecNumber evidence="2">2.7.4.7</ecNumber>
    </recommendedName>
    <alternativeName>
        <fullName>Hydroxymethylpyrimidine kinase</fullName>
        <shortName>HMP kinase</shortName>
    </alternativeName>
    <alternativeName>
        <fullName>Hydroxymethylpyrimidine phosphate kinase</fullName>
        <shortName>HMP-P kinase</shortName>
        <shortName>HMP-phosphate kinase</shortName>
        <shortName>HMPP kinase</shortName>
    </alternativeName>
</protein>
<organism>
    <name type="scientific">Staphylococcus aureus (strain MW2)</name>
    <dbReference type="NCBI Taxonomy" id="196620"/>
    <lineage>
        <taxon>Bacteria</taxon>
        <taxon>Bacillati</taxon>
        <taxon>Bacillota</taxon>
        <taxon>Bacilli</taxon>
        <taxon>Bacillales</taxon>
        <taxon>Staphylococcaceae</taxon>
        <taxon>Staphylococcus</taxon>
    </lineage>
</organism>
<accession>Q8NVH3</accession>
<feature type="chain" id="PRO_0000192032" description="Hydroxymethylpyrimidine/phosphomethylpyrimidine kinase">
    <location>
        <begin position="1"/>
        <end position="276"/>
    </location>
</feature>
<feature type="binding site" evidence="1">
    <location>
        <position position="45"/>
    </location>
    <ligand>
        <name>4-amino-5-hydroxymethyl-2-methylpyrimidine</name>
        <dbReference type="ChEBI" id="CHEBI:16892"/>
    </ligand>
</feature>
<proteinExistence type="inferred from homology"/>